<feature type="chain" id="PRO_1000073731" description="Aspartate carbamoyltransferase catalytic subunit">
    <location>
        <begin position="1"/>
        <end position="311"/>
    </location>
</feature>
<feature type="binding site" evidence="1">
    <location>
        <position position="58"/>
    </location>
    <ligand>
        <name>carbamoyl phosphate</name>
        <dbReference type="ChEBI" id="CHEBI:58228"/>
    </ligand>
</feature>
<feature type="binding site" evidence="1">
    <location>
        <position position="59"/>
    </location>
    <ligand>
        <name>carbamoyl phosphate</name>
        <dbReference type="ChEBI" id="CHEBI:58228"/>
    </ligand>
</feature>
<feature type="binding site" evidence="1">
    <location>
        <position position="86"/>
    </location>
    <ligand>
        <name>L-aspartate</name>
        <dbReference type="ChEBI" id="CHEBI:29991"/>
    </ligand>
</feature>
<feature type="binding site" evidence="1">
    <location>
        <position position="108"/>
    </location>
    <ligand>
        <name>carbamoyl phosphate</name>
        <dbReference type="ChEBI" id="CHEBI:58228"/>
    </ligand>
</feature>
<feature type="binding site" evidence="1">
    <location>
        <position position="136"/>
    </location>
    <ligand>
        <name>carbamoyl phosphate</name>
        <dbReference type="ChEBI" id="CHEBI:58228"/>
    </ligand>
</feature>
<feature type="binding site" evidence="1">
    <location>
        <position position="139"/>
    </location>
    <ligand>
        <name>carbamoyl phosphate</name>
        <dbReference type="ChEBI" id="CHEBI:58228"/>
    </ligand>
</feature>
<feature type="binding site" evidence="1">
    <location>
        <position position="169"/>
    </location>
    <ligand>
        <name>L-aspartate</name>
        <dbReference type="ChEBI" id="CHEBI:29991"/>
    </ligand>
</feature>
<feature type="binding site" evidence="1">
    <location>
        <position position="224"/>
    </location>
    <ligand>
        <name>L-aspartate</name>
        <dbReference type="ChEBI" id="CHEBI:29991"/>
    </ligand>
</feature>
<feature type="binding site" evidence="1">
    <location>
        <position position="265"/>
    </location>
    <ligand>
        <name>carbamoyl phosphate</name>
        <dbReference type="ChEBI" id="CHEBI:58228"/>
    </ligand>
</feature>
<feature type="binding site" evidence="1">
    <location>
        <position position="266"/>
    </location>
    <ligand>
        <name>carbamoyl phosphate</name>
        <dbReference type="ChEBI" id="CHEBI:58228"/>
    </ligand>
</feature>
<dbReference type="EC" id="2.1.3.2" evidence="1"/>
<dbReference type="EMBL" id="CP000698">
    <property type="protein sequence ID" value="ABQ26046.1"/>
    <property type="molecule type" value="Genomic_DNA"/>
</dbReference>
<dbReference type="RefSeq" id="WP_011938749.1">
    <property type="nucleotide sequence ID" value="NC_009483.1"/>
</dbReference>
<dbReference type="SMR" id="A5GF41"/>
<dbReference type="STRING" id="351605.Gura_1856"/>
<dbReference type="KEGG" id="gur:Gura_1856"/>
<dbReference type="HOGENOM" id="CLU_043846_2_0_7"/>
<dbReference type="OrthoDB" id="9774690at2"/>
<dbReference type="UniPathway" id="UPA00070">
    <property type="reaction ID" value="UER00116"/>
</dbReference>
<dbReference type="Proteomes" id="UP000006695">
    <property type="component" value="Chromosome"/>
</dbReference>
<dbReference type="GO" id="GO:0005829">
    <property type="term" value="C:cytosol"/>
    <property type="evidence" value="ECO:0007669"/>
    <property type="project" value="TreeGrafter"/>
</dbReference>
<dbReference type="GO" id="GO:0016597">
    <property type="term" value="F:amino acid binding"/>
    <property type="evidence" value="ECO:0007669"/>
    <property type="project" value="InterPro"/>
</dbReference>
<dbReference type="GO" id="GO:0004070">
    <property type="term" value="F:aspartate carbamoyltransferase activity"/>
    <property type="evidence" value="ECO:0007669"/>
    <property type="project" value="UniProtKB-UniRule"/>
</dbReference>
<dbReference type="GO" id="GO:0006207">
    <property type="term" value="P:'de novo' pyrimidine nucleobase biosynthetic process"/>
    <property type="evidence" value="ECO:0007669"/>
    <property type="project" value="InterPro"/>
</dbReference>
<dbReference type="GO" id="GO:0044205">
    <property type="term" value="P:'de novo' UMP biosynthetic process"/>
    <property type="evidence" value="ECO:0007669"/>
    <property type="project" value="UniProtKB-UniRule"/>
</dbReference>
<dbReference type="GO" id="GO:0006520">
    <property type="term" value="P:amino acid metabolic process"/>
    <property type="evidence" value="ECO:0007669"/>
    <property type="project" value="InterPro"/>
</dbReference>
<dbReference type="FunFam" id="3.40.50.1370:FF:000007">
    <property type="entry name" value="Aspartate carbamoyltransferase"/>
    <property type="match status" value="1"/>
</dbReference>
<dbReference type="Gene3D" id="3.40.50.1370">
    <property type="entry name" value="Aspartate/ornithine carbamoyltransferase"/>
    <property type="match status" value="2"/>
</dbReference>
<dbReference type="HAMAP" id="MF_00001">
    <property type="entry name" value="Asp_carb_tr"/>
    <property type="match status" value="1"/>
</dbReference>
<dbReference type="InterPro" id="IPR006132">
    <property type="entry name" value="Asp/Orn_carbamoyltranf_P-bd"/>
</dbReference>
<dbReference type="InterPro" id="IPR006130">
    <property type="entry name" value="Asp/Orn_carbamoylTrfase"/>
</dbReference>
<dbReference type="InterPro" id="IPR036901">
    <property type="entry name" value="Asp/Orn_carbamoylTrfase_sf"/>
</dbReference>
<dbReference type="InterPro" id="IPR002082">
    <property type="entry name" value="Asp_carbamoyltransf"/>
</dbReference>
<dbReference type="InterPro" id="IPR006131">
    <property type="entry name" value="Asp_carbamoyltransf_Asp/Orn-bd"/>
</dbReference>
<dbReference type="NCBIfam" id="TIGR00670">
    <property type="entry name" value="asp_carb_tr"/>
    <property type="match status" value="1"/>
</dbReference>
<dbReference type="NCBIfam" id="NF002032">
    <property type="entry name" value="PRK00856.1"/>
    <property type="match status" value="1"/>
</dbReference>
<dbReference type="PANTHER" id="PTHR45753:SF6">
    <property type="entry name" value="ASPARTATE CARBAMOYLTRANSFERASE"/>
    <property type="match status" value="1"/>
</dbReference>
<dbReference type="PANTHER" id="PTHR45753">
    <property type="entry name" value="ORNITHINE CARBAMOYLTRANSFERASE, MITOCHONDRIAL"/>
    <property type="match status" value="1"/>
</dbReference>
<dbReference type="Pfam" id="PF00185">
    <property type="entry name" value="OTCace"/>
    <property type="match status" value="1"/>
</dbReference>
<dbReference type="Pfam" id="PF02729">
    <property type="entry name" value="OTCace_N"/>
    <property type="match status" value="1"/>
</dbReference>
<dbReference type="PRINTS" id="PR00100">
    <property type="entry name" value="AOTCASE"/>
</dbReference>
<dbReference type="PRINTS" id="PR00101">
    <property type="entry name" value="ATCASE"/>
</dbReference>
<dbReference type="SUPFAM" id="SSF53671">
    <property type="entry name" value="Aspartate/ornithine carbamoyltransferase"/>
    <property type="match status" value="1"/>
</dbReference>
<dbReference type="PROSITE" id="PS00097">
    <property type="entry name" value="CARBAMOYLTRANSFERASE"/>
    <property type="match status" value="1"/>
</dbReference>
<sequence length="311" mass="34299">MAFKHKDIIGLQDLTREEIELLLNTAENLKEINERDIKKVPTLRGKTIVNLFYEASTRTRTSFEIAAKRLSADTINITASTSSVTKGETLSDTARNVLAMKPDIIVMRHAVSGAHHYLAQRVSCSVINAGDGAHEHPSQGLLDMLTMRQKFGKLDGLKVAIVGDITHSRVARSNIYGLTRMGAHVFLAGPPTMMPPGIERLGNVTVCRDMRAAITDADVVMMLRIQLERQGKTLLPTLKEYSRYFGLNNHLLQLAKKDAMVMHPGPINRGVELCSHVADGDQSHILKQVENGVAVRMSMLYHVSGGELPTE</sequence>
<evidence type="ECO:0000255" key="1">
    <source>
        <dbReference type="HAMAP-Rule" id="MF_00001"/>
    </source>
</evidence>
<accession>A5GF41</accession>
<gene>
    <name evidence="1" type="primary">pyrB</name>
    <name type="ordered locus">Gura_1856</name>
</gene>
<name>PYRB_GEOUR</name>
<protein>
    <recommendedName>
        <fullName evidence="1">Aspartate carbamoyltransferase catalytic subunit</fullName>
        <ecNumber evidence="1">2.1.3.2</ecNumber>
    </recommendedName>
    <alternativeName>
        <fullName evidence="1">Aspartate transcarbamylase</fullName>
        <shortName evidence="1">ATCase</shortName>
    </alternativeName>
</protein>
<comment type="function">
    <text evidence="1">Catalyzes the condensation of carbamoyl phosphate and aspartate to form carbamoyl aspartate and inorganic phosphate, the committed step in the de novo pyrimidine nucleotide biosynthesis pathway.</text>
</comment>
<comment type="catalytic activity">
    <reaction evidence="1">
        <text>carbamoyl phosphate + L-aspartate = N-carbamoyl-L-aspartate + phosphate + H(+)</text>
        <dbReference type="Rhea" id="RHEA:20013"/>
        <dbReference type="ChEBI" id="CHEBI:15378"/>
        <dbReference type="ChEBI" id="CHEBI:29991"/>
        <dbReference type="ChEBI" id="CHEBI:32814"/>
        <dbReference type="ChEBI" id="CHEBI:43474"/>
        <dbReference type="ChEBI" id="CHEBI:58228"/>
        <dbReference type="EC" id="2.1.3.2"/>
    </reaction>
</comment>
<comment type="pathway">
    <text evidence="1">Pyrimidine metabolism; UMP biosynthesis via de novo pathway; (S)-dihydroorotate from bicarbonate: step 2/3.</text>
</comment>
<comment type="subunit">
    <text evidence="1">Heterododecamer (2C3:3R2) of six catalytic PyrB chains organized as two trimers (C3), and six regulatory PyrI chains organized as three dimers (R2).</text>
</comment>
<comment type="similarity">
    <text evidence="1">Belongs to the aspartate/ornithine carbamoyltransferase superfamily. ATCase family.</text>
</comment>
<proteinExistence type="inferred from homology"/>
<organism>
    <name type="scientific">Geotalea uraniireducens (strain Rf4)</name>
    <name type="common">Geobacter uraniireducens</name>
    <dbReference type="NCBI Taxonomy" id="351605"/>
    <lineage>
        <taxon>Bacteria</taxon>
        <taxon>Pseudomonadati</taxon>
        <taxon>Thermodesulfobacteriota</taxon>
        <taxon>Desulfuromonadia</taxon>
        <taxon>Geobacterales</taxon>
        <taxon>Geobacteraceae</taxon>
        <taxon>Geotalea</taxon>
    </lineage>
</organism>
<keyword id="KW-0665">Pyrimidine biosynthesis</keyword>
<keyword id="KW-1185">Reference proteome</keyword>
<keyword id="KW-0808">Transferase</keyword>
<reference key="1">
    <citation type="submission" date="2007-05" db="EMBL/GenBank/DDBJ databases">
        <title>Complete sequence of Geobacter uraniireducens Rf4.</title>
        <authorList>
            <consortium name="US DOE Joint Genome Institute"/>
            <person name="Copeland A."/>
            <person name="Lucas S."/>
            <person name="Lapidus A."/>
            <person name="Barry K."/>
            <person name="Detter J.C."/>
            <person name="Glavina del Rio T."/>
            <person name="Hammon N."/>
            <person name="Israni S."/>
            <person name="Dalin E."/>
            <person name="Tice H."/>
            <person name="Pitluck S."/>
            <person name="Chertkov O."/>
            <person name="Brettin T."/>
            <person name="Bruce D."/>
            <person name="Han C."/>
            <person name="Schmutz J."/>
            <person name="Larimer F."/>
            <person name="Land M."/>
            <person name="Hauser L."/>
            <person name="Kyrpides N."/>
            <person name="Mikhailova N."/>
            <person name="Shelobolina E."/>
            <person name="Aklujkar M."/>
            <person name="Lovley D."/>
            <person name="Richardson P."/>
        </authorList>
    </citation>
    <scope>NUCLEOTIDE SEQUENCE [LARGE SCALE GENOMIC DNA]</scope>
    <source>
        <strain>ATCC BAA-1134 / JCM 13001 / Rf4</strain>
    </source>
</reference>